<evidence type="ECO:0000255" key="1">
    <source>
        <dbReference type="HAMAP-Rule" id="MF_01631"/>
    </source>
</evidence>
<protein>
    <recommendedName>
        <fullName evidence="1">Bifunctional protein GlmU</fullName>
    </recommendedName>
    <domain>
        <recommendedName>
            <fullName evidence="1">UDP-N-acetylglucosamine pyrophosphorylase</fullName>
            <ecNumber evidence="1">2.7.7.23</ecNumber>
        </recommendedName>
        <alternativeName>
            <fullName evidence="1">N-acetylglucosamine-1-phosphate uridyltransferase</fullName>
        </alternativeName>
    </domain>
    <domain>
        <recommendedName>
            <fullName evidence="1">Glucosamine-1-phosphate N-acetyltransferase</fullName>
            <ecNumber evidence="1">2.3.1.157</ecNumber>
        </recommendedName>
    </domain>
</protein>
<dbReference type="EC" id="2.7.7.23" evidence="1"/>
<dbReference type="EC" id="2.3.1.157" evidence="1"/>
<dbReference type="EMBL" id="CP000744">
    <property type="protein sequence ID" value="ABR86894.1"/>
    <property type="molecule type" value="Genomic_DNA"/>
</dbReference>
<dbReference type="RefSeq" id="WP_012078096.1">
    <property type="nucleotide sequence ID" value="NC_009656.1"/>
</dbReference>
<dbReference type="SMR" id="A6VF30"/>
<dbReference type="GeneID" id="77224105"/>
<dbReference type="KEGG" id="pap:PSPA7_6354"/>
<dbReference type="HOGENOM" id="CLU_029499_15_2_6"/>
<dbReference type="UniPathway" id="UPA00113">
    <property type="reaction ID" value="UER00532"/>
</dbReference>
<dbReference type="UniPathway" id="UPA00113">
    <property type="reaction ID" value="UER00533"/>
</dbReference>
<dbReference type="UniPathway" id="UPA00973"/>
<dbReference type="Proteomes" id="UP000001582">
    <property type="component" value="Chromosome"/>
</dbReference>
<dbReference type="GO" id="GO:0005737">
    <property type="term" value="C:cytoplasm"/>
    <property type="evidence" value="ECO:0007669"/>
    <property type="project" value="UniProtKB-SubCell"/>
</dbReference>
<dbReference type="GO" id="GO:0016020">
    <property type="term" value="C:membrane"/>
    <property type="evidence" value="ECO:0007669"/>
    <property type="project" value="GOC"/>
</dbReference>
<dbReference type="GO" id="GO:0019134">
    <property type="term" value="F:glucosamine-1-phosphate N-acetyltransferase activity"/>
    <property type="evidence" value="ECO:0007669"/>
    <property type="project" value="UniProtKB-UniRule"/>
</dbReference>
<dbReference type="GO" id="GO:0000287">
    <property type="term" value="F:magnesium ion binding"/>
    <property type="evidence" value="ECO:0007669"/>
    <property type="project" value="UniProtKB-UniRule"/>
</dbReference>
<dbReference type="GO" id="GO:0003977">
    <property type="term" value="F:UDP-N-acetylglucosamine diphosphorylase activity"/>
    <property type="evidence" value="ECO:0007669"/>
    <property type="project" value="UniProtKB-UniRule"/>
</dbReference>
<dbReference type="GO" id="GO:0000902">
    <property type="term" value="P:cell morphogenesis"/>
    <property type="evidence" value="ECO:0007669"/>
    <property type="project" value="UniProtKB-UniRule"/>
</dbReference>
<dbReference type="GO" id="GO:0071555">
    <property type="term" value="P:cell wall organization"/>
    <property type="evidence" value="ECO:0007669"/>
    <property type="project" value="UniProtKB-KW"/>
</dbReference>
<dbReference type="GO" id="GO:0009245">
    <property type="term" value="P:lipid A biosynthetic process"/>
    <property type="evidence" value="ECO:0007669"/>
    <property type="project" value="UniProtKB-UniRule"/>
</dbReference>
<dbReference type="GO" id="GO:0009252">
    <property type="term" value="P:peptidoglycan biosynthetic process"/>
    <property type="evidence" value="ECO:0007669"/>
    <property type="project" value="UniProtKB-UniRule"/>
</dbReference>
<dbReference type="GO" id="GO:0008360">
    <property type="term" value="P:regulation of cell shape"/>
    <property type="evidence" value="ECO:0007669"/>
    <property type="project" value="UniProtKB-KW"/>
</dbReference>
<dbReference type="GO" id="GO:0006048">
    <property type="term" value="P:UDP-N-acetylglucosamine biosynthetic process"/>
    <property type="evidence" value="ECO:0007669"/>
    <property type="project" value="UniProtKB-UniPathway"/>
</dbReference>
<dbReference type="CDD" id="cd02540">
    <property type="entry name" value="GT2_GlmU_N_bac"/>
    <property type="match status" value="1"/>
</dbReference>
<dbReference type="CDD" id="cd03353">
    <property type="entry name" value="LbH_GlmU_C"/>
    <property type="match status" value="1"/>
</dbReference>
<dbReference type="Gene3D" id="2.160.10.10">
    <property type="entry name" value="Hexapeptide repeat proteins"/>
    <property type="match status" value="1"/>
</dbReference>
<dbReference type="Gene3D" id="3.90.550.10">
    <property type="entry name" value="Spore Coat Polysaccharide Biosynthesis Protein SpsA, Chain A"/>
    <property type="match status" value="1"/>
</dbReference>
<dbReference type="HAMAP" id="MF_01631">
    <property type="entry name" value="GlmU"/>
    <property type="match status" value="1"/>
</dbReference>
<dbReference type="InterPro" id="IPR005882">
    <property type="entry name" value="Bifunctional_GlmU"/>
</dbReference>
<dbReference type="InterPro" id="IPR050065">
    <property type="entry name" value="GlmU-like"/>
</dbReference>
<dbReference type="InterPro" id="IPR038009">
    <property type="entry name" value="GlmU_C_LbH"/>
</dbReference>
<dbReference type="InterPro" id="IPR001451">
    <property type="entry name" value="Hexapep"/>
</dbReference>
<dbReference type="InterPro" id="IPR025877">
    <property type="entry name" value="MobA-like_NTP_Trfase"/>
</dbReference>
<dbReference type="InterPro" id="IPR029044">
    <property type="entry name" value="Nucleotide-diphossugar_trans"/>
</dbReference>
<dbReference type="InterPro" id="IPR011004">
    <property type="entry name" value="Trimer_LpxA-like_sf"/>
</dbReference>
<dbReference type="NCBIfam" id="TIGR01173">
    <property type="entry name" value="glmU"/>
    <property type="match status" value="1"/>
</dbReference>
<dbReference type="PANTHER" id="PTHR43584:SF3">
    <property type="entry name" value="BIFUNCTIONAL PROTEIN GLMU"/>
    <property type="match status" value="1"/>
</dbReference>
<dbReference type="PANTHER" id="PTHR43584">
    <property type="entry name" value="NUCLEOTIDYL TRANSFERASE"/>
    <property type="match status" value="1"/>
</dbReference>
<dbReference type="Pfam" id="PF00132">
    <property type="entry name" value="Hexapep"/>
    <property type="match status" value="2"/>
</dbReference>
<dbReference type="Pfam" id="PF12804">
    <property type="entry name" value="NTP_transf_3"/>
    <property type="match status" value="1"/>
</dbReference>
<dbReference type="SUPFAM" id="SSF53448">
    <property type="entry name" value="Nucleotide-diphospho-sugar transferases"/>
    <property type="match status" value="1"/>
</dbReference>
<dbReference type="SUPFAM" id="SSF51161">
    <property type="entry name" value="Trimeric LpxA-like enzymes"/>
    <property type="match status" value="1"/>
</dbReference>
<proteinExistence type="inferred from homology"/>
<sequence length="454" mass="48880">MSLEIVILAAGQGTRMRSALPKVLHPIAGKPMLGHVIDCARQLQPERIHVVIGHGADLVRERMAADDLNFVLQAEQLGTGHAVAQALPFLSAEQVLILYGDVPLIQLDTLQRLLAQVTPDQLSLLTVDMLDPTGYGRIVRDDQGAVQAIVEHKDATPAQRQIGEINTGILAVPGKRLADWLGRLSNDNAQGEYYLTDVIAMAVGDGLVVASAQPLDAMEVQGVNDRMQQAQLERHYQRLRAEELMRQGVTLLDPQRLDVRGEVSVGRDVLIDVNVVLEGRVVIEDDVRIGPNCVIRDSVLRRGAVIKANSHLEGAELGEGSDAGPFARLRPGSVLGARAHVGNFVELKNARLGEGSKAGHLSYLGDAELGANCNIGAGTITCNYDGANKFRTELGDDVFIGSNNSLVAPLKIGDGATTAAGSTITHEVPAKNLAFGRARQKNLENWKRPEKIRK</sequence>
<reference key="1">
    <citation type="submission" date="2007-06" db="EMBL/GenBank/DDBJ databases">
        <authorList>
            <person name="Dodson R.J."/>
            <person name="Harkins D."/>
            <person name="Paulsen I.T."/>
        </authorList>
    </citation>
    <scope>NUCLEOTIDE SEQUENCE [LARGE SCALE GENOMIC DNA]</scope>
    <source>
        <strain>DSM 24068 / PA7</strain>
    </source>
</reference>
<feature type="chain" id="PRO_1000056184" description="Bifunctional protein GlmU">
    <location>
        <begin position="1"/>
        <end position="454"/>
    </location>
</feature>
<feature type="region of interest" description="Pyrophosphorylase" evidence="1">
    <location>
        <begin position="1"/>
        <end position="226"/>
    </location>
</feature>
<feature type="region of interest" description="Linker" evidence="1">
    <location>
        <begin position="227"/>
        <end position="247"/>
    </location>
</feature>
<feature type="region of interest" description="N-acetyltransferase" evidence="1">
    <location>
        <begin position="248"/>
        <end position="454"/>
    </location>
</feature>
<feature type="active site" description="Proton acceptor" evidence="1">
    <location>
        <position position="360"/>
    </location>
</feature>
<feature type="binding site" evidence="1">
    <location>
        <begin position="8"/>
        <end position="11"/>
    </location>
    <ligand>
        <name>UDP-N-acetyl-alpha-D-glucosamine</name>
        <dbReference type="ChEBI" id="CHEBI:57705"/>
    </ligand>
</feature>
<feature type="binding site" evidence="1">
    <location>
        <position position="22"/>
    </location>
    <ligand>
        <name>UDP-N-acetyl-alpha-D-glucosamine</name>
        <dbReference type="ChEBI" id="CHEBI:57705"/>
    </ligand>
</feature>
<feature type="binding site" evidence="1">
    <location>
        <position position="73"/>
    </location>
    <ligand>
        <name>UDP-N-acetyl-alpha-D-glucosamine</name>
        <dbReference type="ChEBI" id="CHEBI:57705"/>
    </ligand>
</feature>
<feature type="binding site" evidence="1">
    <location>
        <begin position="78"/>
        <end position="79"/>
    </location>
    <ligand>
        <name>UDP-N-acetyl-alpha-D-glucosamine</name>
        <dbReference type="ChEBI" id="CHEBI:57705"/>
    </ligand>
</feature>
<feature type="binding site" evidence="1">
    <location>
        <begin position="99"/>
        <end position="101"/>
    </location>
    <ligand>
        <name>UDP-N-acetyl-alpha-D-glucosamine</name>
        <dbReference type="ChEBI" id="CHEBI:57705"/>
    </ligand>
</feature>
<feature type="binding site" evidence="1">
    <location>
        <position position="101"/>
    </location>
    <ligand>
        <name>Mg(2+)</name>
        <dbReference type="ChEBI" id="CHEBI:18420"/>
    </ligand>
</feature>
<feature type="binding site" evidence="1">
    <location>
        <position position="136"/>
    </location>
    <ligand>
        <name>UDP-N-acetyl-alpha-D-glucosamine</name>
        <dbReference type="ChEBI" id="CHEBI:57705"/>
    </ligand>
</feature>
<feature type="binding site" evidence="1">
    <location>
        <position position="151"/>
    </location>
    <ligand>
        <name>UDP-N-acetyl-alpha-D-glucosamine</name>
        <dbReference type="ChEBI" id="CHEBI:57705"/>
    </ligand>
</feature>
<feature type="binding site" evidence="1">
    <location>
        <position position="166"/>
    </location>
    <ligand>
        <name>UDP-N-acetyl-alpha-D-glucosamine</name>
        <dbReference type="ChEBI" id="CHEBI:57705"/>
    </ligand>
</feature>
<feature type="binding site" evidence="1">
    <location>
        <position position="224"/>
    </location>
    <ligand>
        <name>Mg(2+)</name>
        <dbReference type="ChEBI" id="CHEBI:18420"/>
    </ligand>
</feature>
<feature type="binding site" evidence="1">
    <location>
        <position position="224"/>
    </location>
    <ligand>
        <name>UDP-N-acetyl-alpha-D-glucosamine</name>
        <dbReference type="ChEBI" id="CHEBI:57705"/>
    </ligand>
</feature>
<feature type="binding site" evidence="1">
    <location>
        <position position="330"/>
    </location>
    <ligand>
        <name>UDP-N-acetyl-alpha-D-glucosamine</name>
        <dbReference type="ChEBI" id="CHEBI:57705"/>
    </ligand>
</feature>
<feature type="binding site" evidence="1">
    <location>
        <position position="348"/>
    </location>
    <ligand>
        <name>UDP-N-acetyl-alpha-D-glucosamine</name>
        <dbReference type="ChEBI" id="CHEBI:57705"/>
    </ligand>
</feature>
<feature type="binding site" evidence="1">
    <location>
        <position position="363"/>
    </location>
    <ligand>
        <name>UDP-N-acetyl-alpha-D-glucosamine</name>
        <dbReference type="ChEBI" id="CHEBI:57705"/>
    </ligand>
</feature>
<feature type="binding site" evidence="1">
    <location>
        <position position="374"/>
    </location>
    <ligand>
        <name>UDP-N-acetyl-alpha-D-glucosamine</name>
        <dbReference type="ChEBI" id="CHEBI:57705"/>
    </ligand>
</feature>
<feature type="binding site" evidence="1">
    <location>
        <position position="377"/>
    </location>
    <ligand>
        <name>acetyl-CoA</name>
        <dbReference type="ChEBI" id="CHEBI:57288"/>
    </ligand>
</feature>
<feature type="binding site" evidence="1">
    <location>
        <begin position="383"/>
        <end position="384"/>
    </location>
    <ligand>
        <name>acetyl-CoA</name>
        <dbReference type="ChEBI" id="CHEBI:57288"/>
    </ligand>
</feature>
<feature type="binding site" evidence="1">
    <location>
        <position position="402"/>
    </location>
    <ligand>
        <name>acetyl-CoA</name>
        <dbReference type="ChEBI" id="CHEBI:57288"/>
    </ligand>
</feature>
<feature type="binding site" evidence="1">
    <location>
        <position position="420"/>
    </location>
    <ligand>
        <name>acetyl-CoA</name>
        <dbReference type="ChEBI" id="CHEBI:57288"/>
    </ligand>
</feature>
<feature type="binding site" evidence="1">
    <location>
        <position position="437"/>
    </location>
    <ligand>
        <name>acetyl-CoA</name>
        <dbReference type="ChEBI" id="CHEBI:57288"/>
    </ligand>
</feature>
<name>GLMU_PSEP7</name>
<gene>
    <name evidence="1" type="primary">glmU</name>
    <name type="ordered locus">PSPA7_6354</name>
</gene>
<organism>
    <name type="scientific">Pseudomonas paraeruginosa (strain DSM 24068 / PA7)</name>
    <name type="common">Pseudomonas aeruginosa (strain PA7)</name>
    <dbReference type="NCBI Taxonomy" id="381754"/>
    <lineage>
        <taxon>Bacteria</taxon>
        <taxon>Pseudomonadati</taxon>
        <taxon>Pseudomonadota</taxon>
        <taxon>Gammaproteobacteria</taxon>
        <taxon>Pseudomonadales</taxon>
        <taxon>Pseudomonadaceae</taxon>
        <taxon>Pseudomonas</taxon>
        <taxon>Pseudomonas paraeruginosa</taxon>
    </lineage>
</organism>
<keyword id="KW-0012">Acyltransferase</keyword>
<keyword id="KW-0133">Cell shape</keyword>
<keyword id="KW-0961">Cell wall biogenesis/degradation</keyword>
<keyword id="KW-0963">Cytoplasm</keyword>
<keyword id="KW-0460">Magnesium</keyword>
<keyword id="KW-0479">Metal-binding</keyword>
<keyword id="KW-0511">Multifunctional enzyme</keyword>
<keyword id="KW-0548">Nucleotidyltransferase</keyword>
<keyword id="KW-0573">Peptidoglycan synthesis</keyword>
<keyword id="KW-0677">Repeat</keyword>
<keyword id="KW-0808">Transferase</keyword>
<accession>A6VF30</accession>
<comment type="function">
    <text evidence="1">Catalyzes the last two sequential reactions in the de novo biosynthetic pathway for UDP-N-acetylglucosamine (UDP-GlcNAc). The C-terminal domain catalyzes the transfer of acetyl group from acetyl coenzyme A to glucosamine-1-phosphate (GlcN-1-P) to produce N-acetylglucosamine-1-phosphate (GlcNAc-1-P), which is converted into UDP-GlcNAc by the transfer of uridine 5-monophosphate (from uridine 5-triphosphate), a reaction catalyzed by the N-terminal domain.</text>
</comment>
<comment type="catalytic activity">
    <reaction evidence="1">
        <text>alpha-D-glucosamine 1-phosphate + acetyl-CoA = N-acetyl-alpha-D-glucosamine 1-phosphate + CoA + H(+)</text>
        <dbReference type="Rhea" id="RHEA:13725"/>
        <dbReference type="ChEBI" id="CHEBI:15378"/>
        <dbReference type="ChEBI" id="CHEBI:57287"/>
        <dbReference type="ChEBI" id="CHEBI:57288"/>
        <dbReference type="ChEBI" id="CHEBI:57776"/>
        <dbReference type="ChEBI" id="CHEBI:58516"/>
        <dbReference type="EC" id="2.3.1.157"/>
    </reaction>
</comment>
<comment type="catalytic activity">
    <reaction evidence="1">
        <text>N-acetyl-alpha-D-glucosamine 1-phosphate + UTP + H(+) = UDP-N-acetyl-alpha-D-glucosamine + diphosphate</text>
        <dbReference type="Rhea" id="RHEA:13509"/>
        <dbReference type="ChEBI" id="CHEBI:15378"/>
        <dbReference type="ChEBI" id="CHEBI:33019"/>
        <dbReference type="ChEBI" id="CHEBI:46398"/>
        <dbReference type="ChEBI" id="CHEBI:57705"/>
        <dbReference type="ChEBI" id="CHEBI:57776"/>
        <dbReference type="EC" id="2.7.7.23"/>
    </reaction>
</comment>
<comment type="cofactor">
    <cofactor evidence="1">
        <name>Mg(2+)</name>
        <dbReference type="ChEBI" id="CHEBI:18420"/>
    </cofactor>
    <text evidence="1">Binds 1 Mg(2+) ion per subunit.</text>
</comment>
<comment type="pathway">
    <text evidence="1">Nucleotide-sugar biosynthesis; UDP-N-acetyl-alpha-D-glucosamine biosynthesis; N-acetyl-alpha-D-glucosamine 1-phosphate from alpha-D-glucosamine 6-phosphate (route II): step 2/2.</text>
</comment>
<comment type="pathway">
    <text evidence="1">Nucleotide-sugar biosynthesis; UDP-N-acetyl-alpha-D-glucosamine biosynthesis; UDP-N-acetyl-alpha-D-glucosamine from N-acetyl-alpha-D-glucosamine 1-phosphate: step 1/1.</text>
</comment>
<comment type="pathway">
    <text evidence="1">Bacterial outer membrane biogenesis; LPS lipid A biosynthesis.</text>
</comment>
<comment type="subunit">
    <text evidence="1">Homotrimer.</text>
</comment>
<comment type="subcellular location">
    <subcellularLocation>
        <location evidence="1">Cytoplasm</location>
    </subcellularLocation>
</comment>
<comment type="similarity">
    <text evidence="1">In the N-terminal section; belongs to the N-acetylglucosamine-1-phosphate uridyltransferase family.</text>
</comment>
<comment type="similarity">
    <text evidence="1">In the C-terminal section; belongs to the transferase hexapeptide repeat family.</text>
</comment>